<reference key="1">
    <citation type="journal article" date="2010" name="Environ. Microbiol.">
        <title>The genome of Syntrophomonas wolfei: new insights into syntrophic metabolism and biohydrogen production.</title>
        <authorList>
            <person name="Sieber J.R."/>
            <person name="Sims D.R."/>
            <person name="Han C."/>
            <person name="Kim E."/>
            <person name="Lykidis A."/>
            <person name="Lapidus A.L."/>
            <person name="McDonnald E."/>
            <person name="Rohlin L."/>
            <person name="Culley D.E."/>
            <person name="Gunsalus R."/>
            <person name="McInerney M.J."/>
        </authorList>
    </citation>
    <scope>NUCLEOTIDE SEQUENCE [LARGE SCALE GENOMIC DNA]</scope>
    <source>
        <strain>DSM 2245B / Goettingen</strain>
    </source>
</reference>
<accession>Q0AYB0</accession>
<sequence>MYKLAAIVGPTAVGKTNISLEVARQINGEIISCDSMQLYRGMNIGTAKASKEEQNIVAHHLIDIADPHENFTVARYQSLVKDLISTINARGKIPILVGGTGLYYQSVVDDYTFFPMEVRQSIRDKWNAIIQEKGLPHVYRLLEQIDPAYAQIISPNDQKRVVRALEVYELTGKAFSTLQDRAENTYYLAVVGLYLERRELYARIERRVDEMIKKGLIEEVAALREKGIDLSYNSMQALGYKQVFYFLEGFINREELLNEIKRETRRYAKRQLTWFKKDQRIKWFNVGDFSDEELLVKNICTFMEGQFGIV</sequence>
<dbReference type="EC" id="2.5.1.75" evidence="1"/>
<dbReference type="EMBL" id="CP000448">
    <property type="protein sequence ID" value="ABI68294.1"/>
    <property type="molecule type" value="Genomic_DNA"/>
</dbReference>
<dbReference type="RefSeq" id="WP_011640399.1">
    <property type="nucleotide sequence ID" value="NC_008346.1"/>
</dbReference>
<dbReference type="SMR" id="Q0AYB0"/>
<dbReference type="STRING" id="335541.Swol_0979"/>
<dbReference type="KEGG" id="swo:Swol_0979"/>
<dbReference type="eggNOG" id="COG0324">
    <property type="taxonomic scope" value="Bacteria"/>
</dbReference>
<dbReference type="HOGENOM" id="CLU_032616_0_1_9"/>
<dbReference type="OrthoDB" id="9776390at2"/>
<dbReference type="Proteomes" id="UP000001968">
    <property type="component" value="Chromosome"/>
</dbReference>
<dbReference type="GO" id="GO:0005524">
    <property type="term" value="F:ATP binding"/>
    <property type="evidence" value="ECO:0007669"/>
    <property type="project" value="UniProtKB-UniRule"/>
</dbReference>
<dbReference type="GO" id="GO:0052381">
    <property type="term" value="F:tRNA dimethylallyltransferase activity"/>
    <property type="evidence" value="ECO:0007669"/>
    <property type="project" value="UniProtKB-UniRule"/>
</dbReference>
<dbReference type="GO" id="GO:0006400">
    <property type="term" value="P:tRNA modification"/>
    <property type="evidence" value="ECO:0007669"/>
    <property type="project" value="TreeGrafter"/>
</dbReference>
<dbReference type="Gene3D" id="1.10.20.140">
    <property type="match status" value="1"/>
</dbReference>
<dbReference type="Gene3D" id="3.40.50.300">
    <property type="entry name" value="P-loop containing nucleotide triphosphate hydrolases"/>
    <property type="match status" value="1"/>
</dbReference>
<dbReference type="HAMAP" id="MF_00185">
    <property type="entry name" value="IPP_trans"/>
    <property type="match status" value="1"/>
</dbReference>
<dbReference type="InterPro" id="IPR039657">
    <property type="entry name" value="Dimethylallyltransferase"/>
</dbReference>
<dbReference type="InterPro" id="IPR018022">
    <property type="entry name" value="IPT"/>
</dbReference>
<dbReference type="InterPro" id="IPR027417">
    <property type="entry name" value="P-loop_NTPase"/>
</dbReference>
<dbReference type="NCBIfam" id="TIGR00174">
    <property type="entry name" value="miaA"/>
    <property type="match status" value="1"/>
</dbReference>
<dbReference type="PANTHER" id="PTHR11088">
    <property type="entry name" value="TRNA DIMETHYLALLYLTRANSFERASE"/>
    <property type="match status" value="1"/>
</dbReference>
<dbReference type="PANTHER" id="PTHR11088:SF60">
    <property type="entry name" value="TRNA DIMETHYLALLYLTRANSFERASE"/>
    <property type="match status" value="1"/>
</dbReference>
<dbReference type="Pfam" id="PF01715">
    <property type="entry name" value="IPPT"/>
    <property type="match status" value="1"/>
</dbReference>
<dbReference type="SUPFAM" id="SSF52540">
    <property type="entry name" value="P-loop containing nucleoside triphosphate hydrolases"/>
    <property type="match status" value="1"/>
</dbReference>
<protein>
    <recommendedName>
        <fullName evidence="1">tRNA dimethylallyltransferase</fullName>
        <ecNumber evidence="1">2.5.1.75</ecNumber>
    </recommendedName>
    <alternativeName>
        <fullName evidence="1">Dimethylallyl diphosphate:tRNA dimethylallyltransferase</fullName>
        <shortName evidence="1">DMAPP:tRNA dimethylallyltransferase</shortName>
        <shortName evidence="1">DMATase</shortName>
    </alternativeName>
    <alternativeName>
        <fullName evidence="1">Isopentenyl-diphosphate:tRNA isopentenyltransferase</fullName>
        <shortName evidence="1">IPP transferase</shortName>
        <shortName evidence="1">IPPT</shortName>
        <shortName evidence="1">IPTase</shortName>
    </alternativeName>
</protein>
<name>MIAA_SYNWW</name>
<feature type="chain" id="PRO_1000191869" description="tRNA dimethylallyltransferase">
    <location>
        <begin position="1"/>
        <end position="310"/>
    </location>
</feature>
<feature type="region of interest" description="Interaction with substrate tRNA" evidence="1">
    <location>
        <begin position="34"/>
        <end position="37"/>
    </location>
</feature>
<feature type="binding site" evidence="1">
    <location>
        <begin position="9"/>
        <end position="16"/>
    </location>
    <ligand>
        <name>ATP</name>
        <dbReference type="ChEBI" id="CHEBI:30616"/>
    </ligand>
</feature>
<feature type="binding site" evidence="1">
    <location>
        <begin position="11"/>
        <end position="16"/>
    </location>
    <ligand>
        <name>substrate</name>
    </ligand>
</feature>
<feature type="site" description="Interaction with substrate tRNA" evidence="1">
    <location>
        <position position="100"/>
    </location>
</feature>
<feature type="site" description="Interaction with substrate tRNA" evidence="1">
    <location>
        <position position="123"/>
    </location>
</feature>
<proteinExistence type="inferred from homology"/>
<keyword id="KW-0067">ATP-binding</keyword>
<keyword id="KW-0460">Magnesium</keyword>
<keyword id="KW-0547">Nucleotide-binding</keyword>
<keyword id="KW-1185">Reference proteome</keyword>
<keyword id="KW-0808">Transferase</keyword>
<keyword id="KW-0819">tRNA processing</keyword>
<gene>
    <name evidence="1" type="primary">miaA</name>
    <name type="ordered locus">Swol_0979</name>
</gene>
<comment type="function">
    <text evidence="1">Catalyzes the transfer of a dimethylallyl group onto the adenine at position 37 in tRNAs that read codons beginning with uridine, leading to the formation of N6-(dimethylallyl)adenosine (i(6)A).</text>
</comment>
<comment type="catalytic activity">
    <reaction evidence="1">
        <text>adenosine(37) in tRNA + dimethylallyl diphosphate = N(6)-dimethylallyladenosine(37) in tRNA + diphosphate</text>
        <dbReference type="Rhea" id="RHEA:26482"/>
        <dbReference type="Rhea" id="RHEA-COMP:10162"/>
        <dbReference type="Rhea" id="RHEA-COMP:10375"/>
        <dbReference type="ChEBI" id="CHEBI:33019"/>
        <dbReference type="ChEBI" id="CHEBI:57623"/>
        <dbReference type="ChEBI" id="CHEBI:74411"/>
        <dbReference type="ChEBI" id="CHEBI:74415"/>
        <dbReference type="EC" id="2.5.1.75"/>
    </reaction>
</comment>
<comment type="cofactor">
    <cofactor evidence="1">
        <name>Mg(2+)</name>
        <dbReference type="ChEBI" id="CHEBI:18420"/>
    </cofactor>
</comment>
<comment type="subunit">
    <text evidence="1">Monomer.</text>
</comment>
<comment type="similarity">
    <text evidence="1">Belongs to the IPP transferase family.</text>
</comment>
<organism>
    <name type="scientific">Syntrophomonas wolfei subsp. wolfei (strain DSM 2245B / Goettingen)</name>
    <dbReference type="NCBI Taxonomy" id="335541"/>
    <lineage>
        <taxon>Bacteria</taxon>
        <taxon>Bacillati</taxon>
        <taxon>Bacillota</taxon>
        <taxon>Clostridia</taxon>
        <taxon>Eubacteriales</taxon>
        <taxon>Syntrophomonadaceae</taxon>
        <taxon>Syntrophomonas</taxon>
    </lineage>
</organism>
<evidence type="ECO:0000255" key="1">
    <source>
        <dbReference type="HAMAP-Rule" id="MF_00185"/>
    </source>
</evidence>